<organism>
    <name type="scientific">Archaeoglobus fulgidus (strain ATCC 49558 / DSM 4304 / JCM 9628 / NBRC 100126 / VC-16)</name>
    <dbReference type="NCBI Taxonomy" id="224325"/>
    <lineage>
        <taxon>Archaea</taxon>
        <taxon>Methanobacteriati</taxon>
        <taxon>Methanobacteriota</taxon>
        <taxon>Archaeoglobi</taxon>
        <taxon>Archaeoglobales</taxon>
        <taxon>Archaeoglobaceae</taxon>
        <taxon>Archaeoglobus</taxon>
    </lineage>
</organism>
<comment type="function">
    <text evidence="1">Catalyzes the formation of 4-(hydroxymethyl)-2-furancarboxaldehyde phosphate (4-HFC-P) from two molecules of glyceraldehyde-3-P (GA-3-P).</text>
</comment>
<comment type="catalytic activity">
    <reaction evidence="1">
        <text>2 D-glyceraldehyde 3-phosphate = 4-(hydroxymethyl)-2-furancarboxaldehyde phosphate + phosphate + 2 H2O</text>
        <dbReference type="Rhea" id="RHEA:43536"/>
        <dbReference type="ChEBI" id="CHEBI:15377"/>
        <dbReference type="ChEBI" id="CHEBI:43474"/>
        <dbReference type="ChEBI" id="CHEBI:59776"/>
        <dbReference type="ChEBI" id="CHEBI:83407"/>
        <dbReference type="EC" id="4.2.3.153"/>
    </reaction>
</comment>
<comment type="pathway">
    <text evidence="1">Cofactor biosynthesis; methanofuran biosynthesis.</text>
</comment>
<comment type="similarity">
    <text evidence="1">Belongs to the MfnB family.</text>
</comment>
<feature type="chain" id="PRO_0000134863" description="(5-formylfuran-3-yl)methyl phosphate synthase">
    <location>
        <begin position="1"/>
        <end position="235"/>
    </location>
</feature>
<feature type="active site" description="Schiff-base intermediate with substrate" evidence="1">
    <location>
        <position position="27"/>
    </location>
</feature>
<feature type="active site" description="Proton acceptor" evidence="1">
    <location>
        <position position="86"/>
    </location>
</feature>
<evidence type="ECO:0000255" key="1">
    <source>
        <dbReference type="HAMAP-Rule" id="MF_00681"/>
    </source>
</evidence>
<protein>
    <recommendedName>
        <fullName evidence="1">(5-formylfuran-3-yl)methyl phosphate synthase</fullName>
        <ecNumber evidence="1">4.2.3.153</ecNumber>
    </recommendedName>
    <alternativeName>
        <fullName evidence="1">4-(hydroxymethyl)-2-furancarboxaldehyde-phosphate synthase</fullName>
        <shortName evidence="1">4-HFC-P synthase</shortName>
    </alternativeName>
</protein>
<name>MFNB_ARCFU</name>
<dbReference type="EC" id="4.2.3.153" evidence="1"/>
<dbReference type="EMBL" id="AE000782">
    <property type="protein sequence ID" value="AAB89060.1"/>
    <property type="molecule type" value="Genomic_DNA"/>
</dbReference>
<dbReference type="PIR" id="D69524">
    <property type="entry name" value="D69524"/>
</dbReference>
<dbReference type="RefSeq" id="WP_010879685.1">
    <property type="nucleotide sequence ID" value="NC_000917.1"/>
</dbReference>
<dbReference type="SMR" id="O28087"/>
<dbReference type="STRING" id="224325.AF_2196"/>
<dbReference type="PaxDb" id="224325-AF_2196"/>
<dbReference type="EnsemblBacteria" id="AAB89060">
    <property type="protein sequence ID" value="AAB89060"/>
    <property type="gene ID" value="AF_2196"/>
</dbReference>
<dbReference type="KEGG" id="afu:AF_2196"/>
<dbReference type="eggNOG" id="arCOG04482">
    <property type="taxonomic scope" value="Archaea"/>
</dbReference>
<dbReference type="HOGENOM" id="CLU_068659_0_0_2"/>
<dbReference type="OrthoDB" id="81473at2157"/>
<dbReference type="PhylomeDB" id="O28087"/>
<dbReference type="UniPathway" id="UPA00080"/>
<dbReference type="Proteomes" id="UP000002199">
    <property type="component" value="Chromosome"/>
</dbReference>
<dbReference type="GO" id="GO:0016830">
    <property type="term" value="F:carbon-carbon lyase activity"/>
    <property type="evidence" value="ECO:0007669"/>
    <property type="project" value="UniProtKB-UniRule"/>
</dbReference>
<dbReference type="GO" id="GO:2001120">
    <property type="term" value="P:methanofuran biosynthetic process"/>
    <property type="evidence" value="ECO:0007669"/>
    <property type="project" value="UniProtKB-UniRule"/>
</dbReference>
<dbReference type="HAMAP" id="MF_00681">
    <property type="entry name" value="MfnB"/>
    <property type="match status" value="1"/>
</dbReference>
<dbReference type="InterPro" id="IPR007565">
    <property type="entry name" value="4HFCP_synth"/>
</dbReference>
<dbReference type="InterPro" id="IPR035081">
    <property type="entry name" value="4HFCP_synth_arc"/>
</dbReference>
<dbReference type="InterPro" id="IPR011060">
    <property type="entry name" value="RibuloseP-bd_barrel"/>
</dbReference>
<dbReference type="NCBIfam" id="NF002575">
    <property type="entry name" value="PRK02227.1-3"/>
    <property type="match status" value="1"/>
</dbReference>
<dbReference type="Pfam" id="PF04476">
    <property type="entry name" value="4HFCP_synth"/>
    <property type="match status" value="1"/>
</dbReference>
<dbReference type="PIRSF" id="PIRSF015957">
    <property type="entry name" value="UCP015957"/>
    <property type="match status" value="1"/>
</dbReference>
<dbReference type="SUPFAM" id="SSF51569">
    <property type="entry name" value="Aldolase"/>
    <property type="match status" value="1"/>
</dbReference>
<dbReference type="SUPFAM" id="SSF51366">
    <property type="entry name" value="Ribulose-phoshate binding barrel"/>
    <property type="match status" value="1"/>
</dbReference>
<proteinExistence type="inferred from homology"/>
<reference key="1">
    <citation type="journal article" date="1997" name="Nature">
        <title>The complete genome sequence of the hyperthermophilic, sulphate-reducing archaeon Archaeoglobus fulgidus.</title>
        <authorList>
            <person name="Klenk H.-P."/>
            <person name="Clayton R.A."/>
            <person name="Tomb J.-F."/>
            <person name="White O."/>
            <person name="Nelson K.E."/>
            <person name="Ketchum K.A."/>
            <person name="Dodson R.J."/>
            <person name="Gwinn M.L."/>
            <person name="Hickey E.K."/>
            <person name="Peterson J.D."/>
            <person name="Richardson D.L."/>
            <person name="Kerlavage A.R."/>
            <person name="Graham D.E."/>
            <person name="Kyrpides N.C."/>
            <person name="Fleischmann R.D."/>
            <person name="Quackenbush J."/>
            <person name="Lee N.H."/>
            <person name="Sutton G.G."/>
            <person name="Gill S.R."/>
            <person name="Kirkness E.F."/>
            <person name="Dougherty B.A."/>
            <person name="McKenney K."/>
            <person name="Adams M.D."/>
            <person name="Loftus B.J."/>
            <person name="Peterson S.N."/>
            <person name="Reich C.I."/>
            <person name="McNeil L.K."/>
            <person name="Badger J.H."/>
            <person name="Glodek A."/>
            <person name="Zhou L."/>
            <person name="Overbeek R."/>
            <person name="Gocayne J.D."/>
            <person name="Weidman J.F."/>
            <person name="McDonald L.A."/>
            <person name="Utterback T.R."/>
            <person name="Cotton M.D."/>
            <person name="Spriggs T."/>
            <person name="Artiach P."/>
            <person name="Kaine B.P."/>
            <person name="Sykes S.M."/>
            <person name="Sadow P.W."/>
            <person name="D'Andrea K.P."/>
            <person name="Bowman C."/>
            <person name="Fujii C."/>
            <person name="Garland S.A."/>
            <person name="Mason T.M."/>
            <person name="Olsen G.J."/>
            <person name="Fraser C.M."/>
            <person name="Smith H.O."/>
            <person name="Woese C.R."/>
            <person name="Venter J.C."/>
        </authorList>
    </citation>
    <scope>NUCLEOTIDE SEQUENCE [LARGE SCALE GENOMIC DNA]</scope>
    <source>
        <strain>ATCC 49558 / DSM 4304 / JCM 9628 / NBRC 100126 / VC-16</strain>
    </source>
</reference>
<accession>O28087</accession>
<gene>
    <name evidence="1" type="primary">mfnB</name>
    <name type="ordered locus">AF_2196</name>
</gene>
<sequence>MKVLVSPMSVAEAIEAIEGGADIIDVKNPAEGSLGANFPWVIREISELAKKYGKEISATTGDMPYKPGTASLAALGAAVAGADYIKVGLYGVKNAEEAYEMMVGVVRAVKDFDSSKKVVAAGYGDYYRISSVSPLDLPEAVAKAGADIVMVDTAIKDGTSLFDHMKIGDIESFVKLARDNGLMVALAGNISWNHIETLKELSPDIIGVRSIVCEGDRSSMIKRELVVKLMEAVHG</sequence>
<keyword id="KW-0456">Lyase</keyword>
<keyword id="KW-1185">Reference proteome</keyword>
<keyword id="KW-0704">Schiff base</keyword>